<sequence length="799" mass="86099">MTEVKTGRVVDDAPVNDAPENNAAEATSPARHDAIPEEARQRAAQLRADLERHNRLYYELDTPEISDAEYDALYRELVGLETRWPALRDEASPTQRVGGEVLEGLEKQAHTLRMYSLDNAFSRDEWGAFIQRMYNALPDAPSAFWCDPKMDGLALEVIYENGVFTSALTRGNGEVGEVVTAAMRTVRNLPLALRGDDVPRRIEVRGEVVIAKADFEQLNARQSAAGGKLFANPRNAAAGSVRQLDTTVTAGRPLQFLAYGVGQVVLEGGTAPWTTHSGLMARLREWGFDTPPEGRLCASPDEVWAYYEALGARRESLAIEIDGVVAKLDDTEAQEALGFTARAPRWALALKFPAMQARTRLDDIRVQVGRTGVLTPVAILEPVRVGGVEVSRATLHNEDEIRAKGLMLGDMVLVQRAGDVIPEVVRPLVEERTGDERPFVFPENCPECDSPVVRPQGEVAHRCVNVMCPAVRRQSIIHFVSKAGLDVRGVGERWVQQLVDGGHVTSPVGLFLLTKLDLMRFERMGPTSAANFVTALDAARTGATLVRLICALGIRHVGEQTARTLAANFTDLDALREADAETLQQLPDIGPEVAGSIRSFFANEGNLELLERLRAIGLWPKRQDAPPASEGADAIVLPLQGLKVLFTGSLTRVGRTEAEDMARAAGANIASSVTKSLDLLVVGGKPGSKLEKARKLGIRVMEEADFFAMLASGVASVDASEAVAEETPPSQEAAGAEDAPSQGAAHVRTASDETGSASGDDSRGAAAENDPARPARGGAMSTAEGEDVPRGRAEQLKLF</sequence>
<reference key="1">
    <citation type="journal article" date="2004" name="Nat. Biotechnol.">
        <title>The genome sequence of the anaerobic, sulfate-reducing bacterium Desulfovibrio vulgaris Hildenborough.</title>
        <authorList>
            <person name="Heidelberg J.F."/>
            <person name="Seshadri R."/>
            <person name="Haveman S.A."/>
            <person name="Hemme C.L."/>
            <person name="Paulsen I.T."/>
            <person name="Kolonay J.F."/>
            <person name="Eisen J.A."/>
            <person name="Ward N.L."/>
            <person name="Methe B.A."/>
            <person name="Brinkac L.M."/>
            <person name="Daugherty S.C."/>
            <person name="DeBoy R.T."/>
            <person name="Dodson R.J."/>
            <person name="Durkin A.S."/>
            <person name="Madupu R."/>
            <person name="Nelson W.C."/>
            <person name="Sullivan S.A."/>
            <person name="Fouts D.E."/>
            <person name="Haft D.H."/>
            <person name="Selengut J."/>
            <person name="Peterson J.D."/>
            <person name="Davidsen T.M."/>
            <person name="Zafar N."/>
            <person name="Zhou L."/>
            <person name="Radune D."/>
            <person name="Dimitrov G."/>
            <person name="Hance M."/>
            <person name="Tran K."/>
            <person name="Khouri H.M."/>
            <person name="Gill J."/>
            <person name="Utterback T.R."/>
            <person name="Feldblyum T.V."/>
            <person name="Wall J.D."/>
            <person name="Voordouw G."/>
            <person name="Fraser C.M."/>
        </authorList>
    </citation>
    <scope>NUCLEOTIDE SEQUENCE [LARGE SCALE GENOMIC DNA]</scope>
    <source>
        <strain>ATCC 29579 / DSM 644 / CCUG 34227 / NCIMB 8303 / VKM B-1760 / Hildenborough</strain>
    </source>
</reference>
<name>DNLJ_NITV2</name>
<dbReference type="EC" id="6.5.1.2" evidence="1"/>
<dbReference type="EMBL" id="AE017285">
    <property type="protein sequence ID" value="AAS96086.1"/>
    <property type="molecule type" value="Genomic_DNA"/>
</dbReference>
<dbReference type="RefSeq" id="WP_010938899.1">
    <property type="nucleotide sequence ID" value="NC_002937.3"/>
</dbReference>
<dbReference type="RefSeq" id="YP_010827.1">
    <property type="nucleotide sequence ID" value="NC_002937.3"/>
</dbReference>
<dbReference type="SMR" id="Q72BM7"/>
<dbReference type="STRING" id="882.DVU_1608"/>
<dbReference type="PaxDb" id="882-DVU_1608"/>
<dbReference type="EnsemblBacteria" id="AAS96086">
    <property type="protein sequence ID" value="AAS96086"/>
    <property type="gene ID" value="DVU_1608"/>
</dbReference>
<dbReference type="KEGG" id="dvu:DVU_1608"/>
<dbReference type="PATRIC" id="fig|882.5.peg.1483"/>
<dbReference type="eggNOG" id="COG0272">
    <property type="taxonomic scope" value="Bacteria"/>
</dbReference>
<dbReference type="HOGENOM" id="CLU_007764_2_1_7"/>
<dbReference type="OrthoDB" id="9759736at2"/>
<dbReference type="PhylomeDB" id="Q72BM7"/>
<dbReference type="Proteomes" id="UP000002194">
    <property type="component" value="Chromosome"/>
</dbReference>
<dbReference type="GO" id="GO:0005829">
    <property type="term" value="C:cytosol"/>
    <property type="evidence" value="ECO:0007669"/>
    <property type="project" value="TreeGrafter"/>
</dbReference>
<dbReference type="GO" id="GO:0003677">
    <property type="term" value="F:DNA binding"/>
    <property type="evidence" value="ECO:0007669"/>
    <property type="project" value="InterPro"/>
</dbReference>
<dbReference type="GO" id="GO:0003911">
    <property type="term" value="F:DNA ligase (NAD+) activity"/>
    <property type="evidence" value="ECO:0007669"/>
    <property type="project" value="UniProtKB-UniRule"/>
</dbReference>
<dbReference type="GO" id="GO:0046872">
    <property type="term" value="F:metal ion binding"/>
    <property type="evidence" value="ECO:0007669"/>
    <property type="project" value="UniProtKB-KW"/>
</dbReference>
<dbReference type="GO" id="GO:0006281">
    <property type="term" value="P:DNA repair"/>
    <property type="evidence" value="ECO:0007669"/>
    <property type="project" value="UniProtKB-KW"/>
</dbReference>
<dbReference type="GO" id="GO:0006260">
    <property type="term" value="P:DNA replication"/>
    <property type="evidence" value="ECO:0007669"/>
    <property type="project" value="UniProtKB-KW"/>
</dbReference>
<dbReference type="CDD" id="cd17748">
    <property type="entry name" value="BRCT_DNA_ligase_like"/>
    <property type="match status" value="1"/>
</dbReference>
<dbReference type="CDD" id="cd00114">
    <property type="entry name" value="LIGANc"/>
    <property type="match status" value="1"/>
</dbReference>
<dbReference type="FunFam" id="1.10.150.20:FF:000006">
    <property type="entry name" value="DNA ligase"/>
    <property type="match status" value="1"/>
</dbReference>
<dbReference type="FunFam" id="2.40.50.140:FF:000012">
    <property type="entry name" value="DNA ligase"/>
    <property type="match status" value="1"/>
</dbReference>
<dbReference type="Gene3D" id="6.20.10.30">
    <property type="match status" value="1"/>
</dbReference>
<dbReference type="Gene3D" id="1.10.150.20">
    <property type="entry name" value="5' to 3' exonuclease, C-terminal subdomain"/>
    <property type="match status" value="2"/>
</dbReference>
<dbReference type="Gene3D" id="3.40.50.10190">
    <property type="entry name" value="BRCT domain"/>
    <property type="match status" value="1"/>
</dbReference>
<dbReference type="Gene3D" id="3.30.470.30">
    <property type="entry name" value="DNA ligase/mRNA capping enzyme"/>
    <property type="match status" value="1"/>
</dbReference>
<dbReference type="Gene3D" id="1.10.287.610">
    <property type="entry name" value="Helix hairpin bin"/>
    <property type="match status" value="1"/>
</dbReference>
<dbReference type="Gene3D" id="2.40.50.140">
    <property type="entry name" value="Nucleic acid-binding proteins"/>
    <property type="match status" value="1"/>
</dbReference>
<dbReference type="HAMAP" id="MF_01588">
    <property type="entry name" value="DNA_ligase_A"/>
    <property type="match status" value="1"/>
</dbReference>
<dbReference type="InterPro" id="IPR001357">
    <property type="entry name" value="BRCT_dom"/>
</dbReference>
<dbReference type="InterPro" id="IPR036420">
    <property type="entry name" value="BRCT_dom_sf"/>
</dbReference>
<dbReference type="InterPro" id="IPR041663">
    <property type="entry name" value="DisA/LigA_HHH"/>
</dbReference>
<dbReference type="InterPro" id="IPR001679">
    <property type="entry name" value="DNA_ligase"/>
</dbReference>
<dbReference type="InterPro" id="IPR033136">
    <property type="entry name" value="DNA_ligase_CS"/>
</dbReference>
<dbReference type="InterPro" id="IPR013839">
    <property type="entry name" value="DNAligase_adenylation"/>
</dbReference>
<dbReference type="InterPro" id="IPR013840">
    <property type="entry name" value="DNAligase_N"/>
</dbReference>
<dbReference type="InterPro" id="IPR003583">
    <property type="entry name" value="Hlx-hairpin-Hlx_DNA-bd_motif"/>
</dbReference>
<dbReference type="InterPro" id="IPR012340">
    <property type="entry name" value="NA-bd_OB-fold"/>
</dbReference>
<dbReference type="InterPro" id="IPR004150">
    <property type="entry name" value="NAD_DNA_ligase_OB"/>
</dbReference>
<dbReference type="InterPro" id="IPR010994">
    <property type="entry name" value="RuvA_2-like"/>
</dbReference>
<dbReference type="InterPro" id="IPR004149">
    <property type="entry name" value="Znf_DNAligase_C4"/>
</dbReference>
<dbReference type="NCBIfam" id="TIGR00575">
    <property type="entry name" value="dnlj"/>
    <property type="match status" value="1"/>
</dbReference>
<dbReference type="NCBIfam" id="NF005932">
    <property type="entry name" value="PRK07956.1"/>
    <property type="match status" value="1"/>
</dbReference>
<dbReference type="PANTHER" id="PTHR23389">
    <property type="entry name" value="CHROMOSOME TRANSMISSION FIDELITY FACTOR 18"/>
    <property type="match status" value="1"/>
</dbReference>
<dbReference type="PANTHER" id="PTHR23389:SF9">
    <property type="entry name" value="DNA LIGASE"/>
    <property type="match status" value="1"/>
</dbReference>
<dbReference type="Pfam" id="PF00533">
    <property type="entry name" value="BRCT"/>
    <property type="match status" value="1"/>
</dbReference>
<dbReference type="Pfam" id="PF01653">
    <property type="entry name" value="DNA_ligase_aden"/>
    <property type="match status" value="1"/>
</dbReference>
<dbReference type="Pfam" id="PF03120">
    <property type="entry name" value="DNA_ligase_OB"/>
    <property type="match status" value="1"/>
</dbReference>
<dbReference type="Pfam" id="PF03119">
    <property type="entry name" value="DNA_ligase_ZBD"/>
    <property type="match status" value="1"/>
</dbReference>
<dbReference type="Pfam" id="PF12826">
    <property type="entry name" value="HHH_2"/>
    <property type="match status" value="1"/>
</dbReference>
<dbReference type="Pfam" id="PF22745">
    <property type="entry name" value="Nlig-Ia"/>
    <property type="match status" value="1"/>
</dbReference>
<dbReference type="PIRSF" id="PIRSF001604">
    <property type="entry name" value="LigA"/>
    <property type="match status" value="1"/>
</dbReference>
<dbReference type="SMART" id="SM00292">
    <property type="entry name" value="BRCT"/>
    <property type="match status" value="1"/>
</dbReference>
<dbReference type="SMART" id="SM00278">
    <property type="entry name" value="HhH1"/>
    <property type="match status" value="3"/>
</dbReference>
<dbReference type="SMART" id="SM00532">
    <property type="entry name" value="LIGANc"/>
    <property type="match status" value="1"/>
</dbReference>
<dbReference type="SUPFAM" id="SSF52113">
    <property type="entry name" value="BRCT domain"/>
    <property type="match status" value="1"/>
</dbReference>
<dbReference type="SUPFAM" id="SSF56091">
    <property type="entry name" value="DNA ligase/mRNA capping enzyme, catalytic domain"/>
    <property type="match status" value="1"/>
</dbReference>
<dbReference type="SUPFAM" id="SSF50249">
    <property type="entry name" value="Nucleic acid-binding proteins"/>
    <property type="match status" value="1"/>
</dbReference>
<dbReference type="SUPFAM" id="SSF47781">
    <property type="entry name" value="RuvA domain 2-like"/>
    <property type="match status" value="1"/>
</dbReference>
<dbReference type="PROSITE" id="PS50172">
    <property type="entry name" value="BRCT"/>
    <property type="match status" value="1"/>
</dbReference>
<dbReference type="PROSITE" id="PS01056">
    <property type="entry name" value="DNA_LIGASE_N2"/>
    <property type="match status" value="1"/>
</dbReference>
<evidence type="ECO:0000255" key="1">
    <source>
        <dbReference type="HAMAP-Rule" id="MF_01588"/>
    </source>
</evidence>
<evidence type="ECO:0000256" key="2">
    <source>
        <dbReference type="SAM" id="MobiDB-lite"/>
    </source>
</evidence>
<comment type="function">
    <text evidence="1">DNA ligase that catalyzes the formation of phosphodiester linkages between 5'-phosphoryl and 3'-hydroxyl groups in double-stranded DNA using NAD as a coenzyme and as the energy source for the reaction. It is essential for DNA replication and repair of damaged DNA.</text>
</comment>
<comment type="catalytic activity">
    <reaction evidence="1">
        <text>NAD(+) + (deoxyribonucleotide)n-3'-hydroxyl + 5'-phospho-(deoxyribonucleotide)m = (deoxyribonucleotide)n+m + AMP + beta-nicotinamide D-nucleotide.</text>
        <dbReference type="EC" id="6.5.1.2"/>
    </reaction>
</comment>
<comment type="cofactor">
    <cofactor evidence="1">
        <name>Mg(2+)</name>
        <dbReference type="ChEBI" id="CHEBI:18420"/>
    </cofactor>
    <cofactor evidence="1">
        <name>Mn(2+)</name>
        <dbReference type="ChEBI" id="CHEBI:29035"/>
    </cofactor>
</comment>
<comment type="similarity">
    <text evidence="1">Belongs to the NAD-dependent DNA ligase family. LigA subfamily.</text>
</comment>
<proteinExistence type="inferred from homology"/>
<organism>
    <name type="scientific">Nitratidesulfovibrio vulgaris (strain ATCC 29579 / DSM 644 / CCUG 34227 / NCIMB 8303 / VKM B-1760 / Hildenborough)</name>
    <name type="common">Desulfovibrio vulgaris</name>
    <dbReference type="NCBI Taxonomy" id="882"/>
    <lineage>
        <taxon>Bacteria</taxon>
        <taxon>Pseudomonadati</taxon>
        <taxon>Thermodesulfobacteriota</taxon>
        <taxon>Desulfovibrionia</taxon>
        <taxon>Desulfovibrionales</taxon>
        <taxon>Desulfovibrionaceae</taxon>
        <taxon>Nitratidesulfovibrio</taxon>
    </lineage>
</organism>
<feature type="chain" id="PRO_0000313219" description="DNA ligase">
    <location>
        <begin position="1"/>
        <end position="799"/>
    </location>
</feature>
<feature type="domain" description="BRCT" evidence="1">
    <location>
        <begin position="634"/>
        <end position="723"/>
    </location>
</feature>
<feature type="region of interest" description="Disordered" evidence="2">
    <location>
        <begin position="1"/>
        <end position="35"/>
    </location>
</feature>
<feature type="region of interest" description="Disordered" evidence="2">
    <location>
        <begin position="720"/>
        <end position="799"/>
    </location>
</feature>
<feature type="compositionally biased region" description="Basic and acidic residues" evidence="2">
    <location>
        <begin position="1"/>
        <end position="11"/>
    </location>
</feature>
<feature type="compositionally biased region" description="Low complexity" evidence="2">
    <location>
        <begin position="755"/>
        <end position="767"/>
    </location>
</feature>
<feature type="compositionally biased region" description="Basic and acidic residues" evidence="2">
    <location>
        <begin position="787"/>
        <end position="799"/>
    </location>
</feature>
<feature type="active site" description="N6-AMP-lysine intermediate" evidence="1">
    <location>
        <position position="149"/>
    </location>
</feature>
<feature type="binding site" evidence="1">
    <location>
        <begin position="67"/>
        <end position="71"/>
    </location>
    <ligand>
        <name>NAD(+)</name>
        <dbReference type="ChEBI" id="CHEBI:57540"/>
    </ligand>
</feature>
<feature type="binding site" evidence="1">
    <location>
        <begin position="116"/>
        <end position="117"/>
    </location>
    <ligand>
        <name>NAD(+)</name>
        <dbReference type="ChEBI" id="CHEBI:57540"/>
    </ligand>
</feature>
<feature type="binding site" evidence="1">
    <location>
        <position position="147"/>
    </location>
    <ligand>
        <name>NAD(+)</name>
        <dbReference type="ChEBI" id="CHEBI:57540"/>
    </ligand>
</feature>
<feature type="binding site" evidence="1">
    <location>
        <position position="170"/>
    </location>
    <ligand>
        <name>NAD(+)</name>
        <dbReference type="ChEBI" id="CHEBI:57540"/>
    </ligand>
</feature>
<feature type="binding site" evidence="1">
    <location>
        <position position="207"/>
    </location>
    <ligand>
        <name>NAD(+)</name>
        <dbReference type="ChEBI" id="CHEBI:57540"/>
    </ligand>
</feature>
<feature type="binding site" evidence="1">
    <location>
        <position position="327"/>
    </location>
    <ligand>
        <name>NAD(+)</name>
        <dbReference type="ChEBI" id="CHEBI:57540"/>
    </ligand>
</feature>
<feature type="binding site" evidence="1">
    <location>
        <position position="351"/>
    </location>
    <ligand>
        <name>NAD(+)</name>
        <dbReference type="ChEBI" id="CHEBI:57540"/>
    </ligand>
</feature>
<feature type="binding site" evidence="1">
    <location>
        <position position="445"/>
    </location>
    <ligand>
        <name>Zn(2+)</name>
        <dbReference type="ChEBI" id="CHEBI:29105"/>
    </ligand>
</feature>
<feature type="binding site" evidence="1">
    <location>
        <position position="448"/>
    </location>
    <ligand>
        <name>Zn(2+)</name>
        <dbReference type="ChEBI" id="CHEBI:29105"/>
    </ligand>
</feature>
<feature type="binding site" evidence="1">
    <location>
        <position position="463"/>
    </location>
    <ligand>
        <name>Zn(2+)</name>
        <dbReference type="ChEBI" id="CHEBI:29105"/>
    </ligand>
</feature>
<feature type="binding site" evidence="1">
    <location>
        <position position="468"/>
    </location>
    <ligand>
        <name>Zn(2+)</name>
        <dbReference type="ChEBI" id="CHEBI:29105"/>
    </ligand>
</feature>
<gene>
    <name evidence="1" type="primary">ligA</name>
    <name type="ordered locus">DVU_1608</name>
</gene>
<protein>
    <recommendedName>
        <fullName evidence="1">DNA ligase</fullName>
        <ecNumber evidence="1">6.5.1.2</ecNumber>
    </recommendedName>
    <alternativeName>
        <fullName evidence="1">Polydeoxyribonucleotide synthase [NAD(+)]</fullName>
    </alternativeName>
</protein>
<accession>Q72BM7</accession>
<keyword id="KW-0227">DNA damage</keyword>
<keyword id="KW-0234">DNA repair</keyword>
<keyword id="KW-0235">DNA replication</keyword>
<keyword id="KW-0436">Ligase</keyword>
<keyword id="KW-0460">Magnesium</keyword>
<keyword id="KW-0464">Manganese</keyword>
<keyword id="KW-0479">Metal-binding</keyword>
<keyword id="KW-0520">NAD</keyword>
<keyword id="KW-1185">Reference proteome</keyword>
<keyword id="KW-0862">Zinc</keyword>